<name>GATZ_SALPB</name>
<sequence length="423" mass="47262">MKEIIARHKAGEHLGICSVCSAHPLVIESALLFDLNTDNKVLIEATSNQVNQFGGYTGMKPADFRDFVYGIAQEVGFPRERLILGGDHLGPNCWQNEPAAAAMEKSVELIKAYVAAGFSKIHLDASMSCADDPTPLDPMVVARRAAVLCKAAEETANEEQKCHLTYVIGTEVPVPGGEASTIGSVHVTREVDAARTLETHQIAFRESGLEEALSRVIAIVVQPGVEFDHTQIIHYQPQAAQALSAWIKETPMVYEAHSTDYQTRQAYRALVRDHYAILKVGPALTFALREAIFALAQMENELISPEQRSRVLEVIDEVMLNEPGYWKKYYRPTWSQAMVDIHFSLSDRIRYYWPHPRIRQSVEKLIANLNNVTLPLGLISQFMPVQFERLSEGVLTPTPHNLIIDKIQDVLRAYRFGCTPDVA</sequence>
<accession>A9N702</accession>
<dbReference type="EMBL" id="CP000886">
    <property type="protein sequence ID" value="ABX69394.1"/>
    <property type="status" value="ALT_INIT"/>
    <property type="molecule type" value="Genomic_DNA"/>
</dbReference>
<dbReference type="RefSeq" id="WP_000658627.1">
    <property type="nucleotide sequence ID" value="NC_010102.1"/>
</dbReference>
<dbReference type="SMR" id="A9N702"/>
<dbReference type="KEGG" id="spq:SPAB_04067"/>
<dbReference type="PATRIC" id="fig|1016998.12.peg.3831"/>
<dbReference type="HOGENOM" id="CLU_053334_0_0_6"/>
<dbReference type="BioCyc" id="SENT1016998:SPAB_RS16505-MONOMER"/>
<dbReference type="UniPathway" id="UPA00704">
    <property type="reaction ID" value="UER00716"/>
</dbReference>
<dbReference type="Proteomes" id="UP000008556">
    <property type="component" value="Chromosome"/>
</dbReference>
<dbReference type="GO" id="GO:0005886">
    <property type="term" value="C:plasma membrane"/>
    <property type="evidence" value="ECO:0007669"/>
    <property type="project" value="TreeGrafter"/>
</dbReference>
<dbReference type="GO" id="GO:2001059">
    <property type="term" value="P:D-tagatose 6-phosphate catabolic process"/>
    <property type="evidence" value="ECO:0007669"/>
    <property type="project" value="UniProtKB-UniRule"/>
</dbReference>
<dbReference type="GO" id="GO:0019402">
    <property type="term" value="P:galactitol metabolic process"/>
    <property type="evidence" value="ECO:0007669"/>
    <property type="project" value="UniProtKB-KW"/>
</dbReference>
<dbReference type="GO" id="GO:0009401">
    <property type="term" value="P:phosphoenolpyruvate-dependent sugar phosphotransferase system"/>
    <property type="evidence" value="ECO:0007669"/>
    <property type="project" value="TreeGrafter"/>
</dbReference>
<dbReference type="FunFam" id="1.10.400.20:FF:000001">
    <property type="entry name" value="D-tagatose-1,6-bisphosphate aldolase subunit GatZ"/>
    <property type="match status" value="1"/>
</dbReference>
<dbReference type="FunFam" id="3.20.20.70:FF:000141">
    <property type="entry name" value="D-tagatose-1,6-bisphosphate aldolase subunit GatZ"/>
    <property type="match status" value="1"/>
</dbReference>
<dbReference type="Gene3D" id="3.20.20.70">
    <property type="entry name" value="Aldolase class I"/>
    <property type="match status" value="1"/>
</dbReference>
<dbReference type="Gene3D" id="1.10.400.20">
    <property type="entry name" value="putative tagatose 6-phosphate kinase domain like"/>
    <property type="match status" value="1"/>
</dbReference>
<dbReference type="HAMAP" id="MF_01296">
    <property type="entry name" value="Tagatose_aldol_GatZ"/>
    <property type="match status" value="1"/>
</dbReference>
<dbReference type="InterPro" id="IPR013785">
    <property type="entry name" value="Aldolase_TIM"/>
</dbReference>
<dbReference type="InterPro" id="IPR012062">
    <property type="entry name" value="GatZ/KbaZ-like"/>
</dbReference>
<dbReference type="InterPro" id="IPR050303">
    <property type="entry name" value="GatZ_KbaZ_carbometab"/>
</dbReference>
<dbReference type="InterPro" id="IPR023436">
    <property type="entry name" value="TagBP_ald_GatZ"/>
</dbReference>
<dbReference type="NCBIfam" id="TIGR02810">
    <property type="entry name" value="agaZ_gatZ"/>
    <property type="match status" value="1"/>
</dbReference>
<dbReference type="NCBIfam" id="NF011626">
    <property type="entry name" value="PRK15052.1"/>
    <property type="match status" value="1"/>
</dbReference>
<dbReference type="PANTHER" id="PTHR32502:SF12">
    <property type="entry name" value="D-TAGATOSE-1,6-BISPHOSPHATE ALDOLASE SUBUNIT GATZ"/>
    <property type="match status" value="1"/>
</dbReference>
<dbReference type="PANTHER" id="PTHR32502">
    <property type="entry name" value="N-ACETYLGALACTOSAMINE PERMEASE II COMPONENT-RELATED"/>
    <property type="match status" value="1"/>
</dbReference>
<dbReference type="Pfam" id="PF08013">
    <property type="entry name" value="GatZ_KbaZ-like"/>
    <property type="match status" value="1"/>
</dbReference>
<dbReference type="PIRSF" id="PIRSF009264">
    <property type="entry name" value="TagBP_ald_AgaZ"/>
    <property type="match status" value="1"/>
</dbReference>
<dbReference type="SUPFAM" id="SSF51569">
    <property type="entry name" value="Aldolase"/>
    <property type="match status" value="1"/>
</dbReference>
<organism>
    <name type="scientific">Salmonella paratyphi B (strain ATCC BAA-1250 / SPB7)</name>
    <dbReference type="NCBI Taxonomy" id="1016998"/>
    <lineage>
        <taxon>Bacteria</taxon>
        <taxon>Pseudomonadati</taxon>
        <taxon>Pseudomonadota</taxon>
        <taxon>Gammaproteobacteria</taxon>
        <taxon>Enterobacterales</taxon>
        <taxon>Enterobacteriaceae</taxon>
        <taxon>Salmonella</taxon>
    </lineage>
</organism>
<feature type="chain" id="PRO_0000372516" description="D-tagatose-1,6-bisphosphate aldolase subunit GatZ">
    <location>
        <begin position="1"/>
        <end position="423"/>
    </location>
</feature>
<proteinExistence type="inferred from homology"/>
<comment type="function">
    <text evidence="1">Component of the tagatose-1,6-bisphosphate aldolase GatYZ that is required for full activity and stability of the Y subunit. Could have a chaperone-like function for the proper and stable folding of GatY. When expressed alone, GatZ does not show any aldolase activity. Is involved in the catabolism of galactitol.</text>
</comment>
<comment type="pathway">
    <text evidence="1">Carbohydrate metabolism; D-tagatose 6-phosphate degradation; D-glyceraldehyde 3-phosphate and glycerone phosphate from D-tagatose 6-phosphate: step 2/2.</text>
</comment>
<comment type="subunit">
    <text evidence="1">Forms a complex with GatY.</text>
</comment>
<comment type="similarity">
    <text evidence="1">Belongs to the GatZ/KbaZ family. GatZ subfamily.</text>
</comment>
<comment type="sequence caution" evidence="2">
    <conflict type="erroneous initiation">
        <sequence resource="EMBL-CDS" id="ABX69394"/>
    </conflict>
</comment>
<gene>
    <name evidence="1" type="primary">gatZ</name>
    <name type="ordered locus">SPAB_04067</name>
</gene>
<evidence type="ECO:0000255" key="1">
    <source>
        <dbReference type="HAMAP-Rule" id="MF_01296"/>
    </source>
</evidence>
<evidence type="ECO:0000305" key="2"/>
<protein>
    <recommendedName>
        <fullName evidence="1">D-tagatose-1,6-bisphosphate aldolase subunit GatZ</fullName>
    </recommendedName>
</protein>
<keyword id="KW-0298">Galactitol metabolism</keyword>
<reference key="1">
    <citation type="submission" date="2007-11" db="EMBL/GenBank/DDBJ databases">
        <authorList>
            <consortium name="The Salmonella enterica serovar Paratyphi B Genome Sequencing Project"/>
            <person name="McClelland M."/>
            <person name="Sanderson E.K."/>
            <person name="Porwollik S."/>
            <person name="Spieth J."/>
            <person name="Clifton W.S."/>
            <person name="Fulton R."/>
            <person name="Cordes M."/>
            <person name="Wollam A."/>
            <person name="Shah N."/>
            <person name="Pepin K."/>
            <person name="Bhonagiri V."/>
            <person name="Nash W."/>
            <person name="Johnson M."/>
            <person name="Thiruvilangam P."/>
            <person name="Wilson R."/>
        </authorList>
    </citation>
    <scope>NUCLEOTIDE SEQUENCE [LARGE SCALE GENOMIC DNA]</scope>
    <source>
        <strain>ATCC BAA-1250 / SPB7</strain>
    </source>
</reference>